<dbReference type="EMBL" id="X95385">
    <property type="protein sequence ID" value="CAA64671.1"/>
    <property type="molecule type" value="Genomic_DNA"/>
</dbReference>
<dbReference type="EMBL" id="AE005672">
    <property type="protein sequence ID" value="AAK76284.1"/>
    <property type="molecule type" value="Genomic_DNA"/>
</dbReference>
<dbReference type="PIR" id="C95261">
    <property type="entry name" value="C95261"/>
</dbReference>
<dbReference type="PDB" id="6COT">
    <property type="method" value="NMR"/>
    <property type="chains" value="A=25-41"/>
</dbReference>
<dbReference type="PDB" id="6COU">
    <property type="method" value="NMR"/>
    <property type="chains" value="A=26-41"/>
</dbReference>
<dbReference type="PDB" id="6COV">
    <property type="method" value="NMR"/>
    <property type="chains" value="A=25-41"/>
</dbReference>
<dbReference type="PDBsum" id="6COT"/>
<dbReference type="PDBsum" id="6COU"/>
<dbReference type="PDBsum" id="6COV"/>
<dbReference type="BMRB" id="P72507"/>
<dbReference type="SMR" id="P72507"/>
<dbReference type="PaxDb" id="170187-SP_2237"/>
<dbReference type="EnsemblBacteria" id="AAK76284">
    <property type="protein sequence ID" value="AAK76284"/>
    <property type="gene ID" value="SP_2237"/>
</dbReference>
<dbReference type="KEGG" id="spn:SP_2237"/>
<dbReference type="eggNOG" id="ENOG5032ASE">
    <property type="taxonomic scope" value="Bacteria"/>
</dbReference>
<dbReference type="BioCyc" id="SPNE170187:G1FZB-2340-MONOMER"/>
<dbReference type="Proteomes" id="UP000000585">
    <property type="component" value="Chromosome"/>
</dbReference>
<dbReference type="GO" id="GO:0005576">
    <property type="term" value="C:extracellular region"/>
    <property type="evidence" value="ECO:0007669"/>
    <property type="project" value="UniProtKB-SubCell"/>
</dbReference>
<dbReference type="GO" id="GO:0005186">
    <property type="term" value="F:pheromone activity"/>
    <property type="evidence" value="ECO:0007669"/>
    <property type="project" value="UniProtKB-KW"/>
</dbReference>
<dbReference type="GO" id="GO:0030420">
    <property type="term" value="P:establishment of competence for transformation"/>
    <property type="evidence" value="ECO:0007669"/>
    <property type="project" value="UniProtKB-KW"/>
</dbReference>
<dbReference type="InterPro" id="IPR004288">
    <property type="entry name" value="Competence_ComC"/>
</dbReference>
<dbReference type="NCBIfam" id="NF033214">
    <property type="entry name" value="ComC_Streptocco"/>
    <property type="match status" value="1"/>
</dbReference>
<dbReference type="Pfam" id="PF03047">
    <property type="entry name" value="ComC"/>
    <property type="match status" value="1"/>
</dbReference>
<comment type="function">
    <text>Acts as a pheromone, induces cells to develop competence for genetic transformation.</text>
</comment>
<comment type="subcellular location">
    <subcellularLocation>
        <location>Secreted</location>
    </subcellularLocation>
</comment>
<comment type="similarity">
    <text evidence="2">Belongs to the ComC family.</text>
</comment>
<evidence type="ECO:0000250" key="1"/>
<evidence type="ECO:0000305" key="2"/>
<evidence type="ECO:0007829" key="3">
    <source>
        <dbReference type="PDB" id="6COT"/>
    </source>
</evidence>
<proteinExistence type="evidence at protein level"/>
<gene>
    <name type="primary">comC2</name>
    <name type="ordered locus">SP_2237</name>
</gene>
<name>CSP2_STRPN</name>
<reference key="1">
    <citation type="journal article" date="1996" name="J. Bacteriol.">
        <title>Competence for genetic transformation in encapsulated strains of Streptococcus pneumoniae: two allelic variants of the peptide pheromone.</title>
        <authorList>
            <person name="Pozzi G."/>
            <person name="Masala L."/>
            <person name="Iannelli F."/>
            <person name="Manganelli R."/>
            <person name="Haevarstein L.S."/>
            <person name="Piccoli L."/>
            <person name="Simon D."/>
            <person name="Morrison D.A."/>
        </authorList>
    </citation>
    <scope>NUCLEOTIDE SEQUENCE [GENOMIC DNA]</scope>
    <source>
        <strain>A66 / Type 3</strain>
    </source>
</reference>
<reference key="2">
    <citation type="journal article" date="2001" name="Science">
        <title>Complete genome sequence of a virulent isolate of Streptococcus pneumoniae.</title>
        <authorList>
            <person name="Tettelin H."/>
            <person name="Nelson K.E."/>
            <person name="Paulsen I.T."/>
            <person name="Eisen J.A."/>
            <person name="Read T.D."/>
            <person name="Peterson S.N."/>
            <person name="Heidelberg J.F."/>
            <person name="DeBoy R.T."/>
            <person name="Haft D.H."/>
            <person name="Dodson R.J."/>
            <person name="Durkin A.S."/>
            <person name="Gwinn M.L."/>
            <person name="Kolonay J.F."/>
            <person name="Nelson W.C."/>
            <person name="Peterson J.D."/>
            <person name="Umayam L.A."/>
            <person name="White O."/>
            <person name="Salzberg S.L."/>
            <person name="Lewis M.R."/>
            <person name="Radune D."/>
            <person name="Holtzapple E.K."/>
            <person name="Khouri H.M."/>
            <person name="Wolf A.M."/>
            <person name="Utterback T.R."/>
            <person name="Hansen C.L."/>
            <person name="McDonald L.A."/>
            <person name="Feldblyum T.V."/>
            <person name="Angiuoli S.V."/>
            <person name="Dickinson T."/>
            <person name="Hickey E.K."/>
            <person name="Holt I.E."/>
            <person name="Loftus B.J."/>
            <person name="Yang F."/>
            <person name="Smith H.O."/>
            <person name="Venter J.C."/>
            <person name="Dougherty B.A."/>
            <person name="Morrison D.A."/>
            <person name="Hollingshead S.K."/>
            <person name="Fraser C.M."/>
        </authorList>
    </citation>
    <scope>NUCLEOTIDE SEQUENCE [LARGE SCALE GENOMIC DNA]</scope>
    <source>
        <strain>ATCC BAA-334 / TIGR4</strain>
    </source>
</reference>
<protein>
    <recommendedName>
        <fullName>Competence-stimulating peptide type 2</fullName>
        <shortName>CSP-2</shortName>
    </recommendedName>
</protein>
<keyword id="KW-0002">3D-structure</keyword>
<keyword id="KW-0178">Competence</keyword>
<keyword id="KW-0588">Pheromone</keyword>
<keyword id="KW-1185">Reference proteome</keyword>
<keyword id="KW-0964">Secreted</keyword>
<organism>
    <name type="scientific">Streptococcus pneumoniae serotype 4 (strain ATCC BAA-334 / TIGR4)</name>
    <dbReference type="NCBI Taxonomy" id="170187"/>
    <lineage>
        <taxon>Bacteria</taxon>
        <taxon>Bacillati</taxon>
        <taxon>Bacillota</taxon>
        <taxon>Bacilli</taxon>
        <taxon>Lactobacillales</taxon>
        <taxon>Streptococcaceae</taxon>
        <taxon>Streptococcus</taxon>
    </lineage>
</organism>
<sequence>MKNTVKLEQFVALKEKDLQKIKGGEMRISRIILDFLFLRKK</sequence>
<feature type="propeptide" id="PRO_0000005885" evidence="1">
    <location>
        <begin position="1"/>
        <end position="24"/>
    </location>
</feature>
<feature type="peptide" id="PRO_0000005886" description="Competence-stimulating peptide type 2">
    <location>
        <begin position="25"/>
        <end position="41"/>
    </location>
</feature>
<feature type="strand" evidence="3">
    <location>
        <begin position="27"/>
        <end position="30"/>
    </location>
</feature>
<feature type="turn" evidence="3">
    <location>
        <begin position="31"/>
        <end position="36"/>
    </location>
</feature>
<feature type="helix" evidence="3">
    <location>
        <begin position="37"/>
        <end position="40"/>
    </location>
</feature>
<accession>P72507</accession>